<feature type="chain" id="PRO_0000118870" description="Transcription initiation factor TFIID subunit 4">
    <location>
        <begin position="1"/>
        <end position="921"/>
    </location>
</feature>
<feature type="domain" description="TAFH" evidence="1">
    <location>
        <begin position="290"/>
        <end position="386"/>
    </location>
</feature>
<feature type="region of interest" description="Disordered" evidence="2">
    <location>
        <begin position="66"/>
        <end position="85"/>
    </location>
</feature>
<feature type="region of interest" description="Disordered" evidence="2">
    <location>
        <begin position="166"/>
        <end position="194"/>
    </location>
</feature>
<feature type="region of interest" description="Disordered" evidence="2">
    <location>
        <begin position="423"/>
        <end position="442"/>
    </location>
</feature>
<feature type="region of interest" description="Disordered" evidence="2">
    <location>
        <begin position="860"/>
        <end position="886"/>
    </location>
</feature>
<feature type="splice variant" id="VSP_004441" description="In isoform C." evidence="8 9">
    <location>
        <begin position="138"/>
        <end position="207"/>
    </location>
</feature>
<feature type="sequence conflict" description="In Ref. 5; AAL39952." evidence="10" ref="5">
    <original>V</original>
    <variation>M</variation>
    <location>
        <position position="114"/>
    </location>
</feature>
<dbReference type="EMBL" id="L06861">
    <property type="status" value="NOT_ANNOTATED_CDS"/>
    <property type="molecule type" value="mRNA"/>
</dbReference>
<dbReference type="EMBL" id="S63550">
    <property type="protein sequence ID" value="AAB27433.1"/>
    <property type="molecule type" value="mRNA"/>
</dbReference>
<dbReference type="EMBL" id="AE014296">
    <property type="protein sequence ID" value="AAF49535.1"/>
    <property type="molecule type" value="Genomic_DNA"/>
</dbReference>
<dbReference type="EMBL" id="AE014296">
    <property type="protein sequence ID" value="AAO41248.1"/>
    <property type="molecule type" value="Genomic_DNA"/>
</dbReference>
<dbReference type="EMBL" id="AY069807">
    <property type="protein sequence ID" value="AAL39952.1"/>
    <property type="molecule type" value="mRNA"/>
</dbReference>
<dbReference type="EMBL" id="BT025195">
    <property type="protein sequence ID" value="ABF17886.2"/>
    <property type="molecule type" value="mRNA"/>
</dbReference>
<dbReference type="PIR" id="A48184">
    <property type="entry name" value="A48184"/>
</dbReference>
<dbReference type="RefSeq" id="NP_001163453.1">
    <molecule id="P47825-1"/>
    <property type="nucleotide sequence ID" value="NM_001169982.2"/>
</dbReference>
<dbReference type="RefSeq" id="NP_001287077.1">
    <molecule id="P47825-1"/>
    <property type="nucleotide sequence ID" value="NM_001300148.1"/>
</dbReference>
<dbReference type="RefSeq" id="NP_524102.1">
    <molecule id="P47825-1"/>
    <property type="nucleotide sequence ID" value="NM_079378.4"/>
</dbReference>
<dbReference type="RefSeq" id="NP_730109.1">
    <molecule id="P47825-1"/>
    <property type="nucleotide sequence ID" value="NM_168651.3"/>
</dbReference>
<dbReference type="RefSeq" id="NP_788511.1">
    <molecule id="P47825-2"/>
    <property type="nucleotide sequence ID" value="NM_176333.3"/>
</dbReference>
<dbReference type="RefSeq" id="NP_996101.1">
    <molecule id="P47825-2"/>
    <property type="nucleotide sequence ID" value="NM_206379.3"/>
</dbReference>
<dbReference type="SMR" id="P47825"/>
<dbReference type="BioGRID" id="65074">
    <property type="interactions" value="33"/>
</dbReference>
<dbReference type="DIP" id="DIP-237N"/>
<dbReference type="FunCoup" id="P47825">
    <property type="interactions" value="2369"/>
</dbReference>
<dbReference type="IntAct" id="P47825">
    <property type="interactions" value="16"/>
</dbReference>
<dbReference type="MINT" id="P47825"/>
<dbReference type="STRING" id="7227.FBpp0113081"/>
<dbReference type="GlyGen" id="P47825">
    <property type="glycosylation" value="4 sites, 1 O-linked glycan (3 sites)"/>
</dbReference>
<dbReference type="DNASU" id="39765"/>
<dbReference type="EnsemblMetazoa" id="FBtr0075448">
    <molecule id="P47825-1"/>
    <property type="protein sequence ID" value="FBpp0075205"/>
    <property type="gene ID" value="FBgn0010280"/>
</dbReference>
<dbReference type="EnsemblMetazoa" id="FBtr0075449">
    <molecule id="P47825-1"/>
    <property type="protein sequence ID" value="FBpp0075206"/>
    <property type="gene ID" value="FBgn0010280"/>
</dbReference>
<dbReference type="EnsemblMetazoa" id="FBtr0075450">
    <molecule id="P47825-2"/>
    <property type="protein sequence ID" value="FBpp0075207"/>
    <property type="gene ID" value="FBgn0010280"/>
</dbReference>
<dbReference type="EnsemblMetazoa" id="FBtr0075451">
    <molecule id="P47825-2"/>
    <property type="protein sequence ID" value="FBpp0089259"/>
    <property type="gene ID" value="FBgn0010280"/>
</dbReference>
<dbReference type="EnsemblMetazoa" id="FBtr0301911">
    <molecule id="P47825-1"/>
    <property type="protein sequence ID" value="FBpp0291125"/>
    <property type="gene ID" value="FBgn0010280"/>
</dbReference>
<dbReference type="EnsemblMetazoa" id="FBtr0345951">
    <molecule id="P47825-1"/>
    <property type="protein sequence ID" value="FBpp0311865"/>
    <property type="gene ID" value="FBgn0010280"/>
</dbReference>
<dbReference type="GeneID" id="39765"/>
<dbReference type="KEGG" id="dme:Dmel_CG5444"/>
<dbReference type="AGR" id="FB:FBgn0010280"/>
<dbReference type="CTD" id="6874"/>
<dbReference type="FlyBase" id="FBgn0010280">
    <property type="gene designation" value="Taf4"/>
</dbReference>
<dbReference type="VEuPathDB" id="VectorBase:FBgn0010280"/>
<dbReference type="eggNOG" id="KOG2341">
    <property type="taxonomic scope" value="Eukaryota"/>
</dbReference>
<dbReference type="GeneTree" id="ENSGT00390000011620"/>
<dbReference type="InParanoid" id="P47825"/>
<dbReference type="OrthoDB" id="21060at2759"/>
<dbReference type="PhylomeDB" id="P47825"/>
<dbReference type="Reactome" id="R-DME-674695">
    <property type="pathway name" value="RNA Polymerase II Pre-transcription Events"/>
</dbReference>
<dbReference type="Reactome" id="R-DME-6804756">
    <property type="pathway name" value="Regulation of TP53 Activity through Phosphorylation"/>
</dbReference>
<dbReference type="Reactome" id="R-DME-73776">
    <property type="pathway name" value="RNA Polymerase II Promoter Escape"/>
</dbReference>
<dbReference type="Reactome" id="R-DME-73779">
    <property type="pathway name" value="RNA Polymerase II Transcription Pre-Initiation And Promoter Opening"/>
</dbReference>
<dbReference type="Reactome" id="R-DME-75953">
    <property type="pathway name" value="RNA Polymerase II Transcription Initiation"/>
</dbReference>
<dbReference type="Reactome" id="R-DME-76042">
    <property type="pathway name" value="RNA Polymerase II Transcription Initiation And Promoter Clearance"/>
</dbReference>
<dbReference type="SignaLink" id="P47825"/>
<dbReference type="BioGRID-ORCS" id="39765">
    <property type="hits" value="2 hits in 3 CRISPR screens"/>
</dbReference>
<dbReference type="ChiTaRS" id="Taf4">
    <property type="organism name" value="fly"/>
</dbReference>
<dbReference type="GenomeRNAi" id="39765"/>
<dbReference type="PRO" id="PR:P47825"/>
<dbReference type="Proteomes" id="UP000000803">
    <property type="component" value="Chromosome 3L"/>
</dbReference>
<dbReference type="Bgee" id="FBgn0010280">
    <property type="expression patterns" value="Expressed in wing disc and 268 other cell types or tissues"/>
</dbReference>
<dbReference type="ExpressionAtlas" id="P47825">
    <property type="expression patterns" value="baseline and differential"/>
</dbReference>
<dbReference type="GO" id="GO:0005634">
    <property type="term" value="C:nucleus"/>
    <property type="evidence" value="ECO:0000314"/>
    <property type="project" value="FlyBase"/>
</dbReference>
<dbReference type="GO" id="GO:0005669">
    <property type="term" value="C:transcription factor TFIID complex"/>
    <property type="evidence" value="ECO:0000353"/>
    <property type="project" value="UniProtKB"/>
</dbReference>
<dbReference type="GO" id="GO:0003677">
    <property type="term" value="F:DNA binding"/>
    <property type="evidence" value="ECO:0000314"/>
    <property type="project" value="UniProtKB"/>
</dbReference>
<dbReference type="GO" id="GO:0140297">
    <property type="term" value="F:DNA-binding transcription factor binding"/>
    <property type="evidence" value="ECO:0000353"/>
    <property type="project" value="FlyBase"/>
</dbReference>
<dbReference type="GO" id="GO:0046982">
    <property type="term" value="F:protein heterodimerization activity"/>
    <property type="evidence" value="ECO:0007669"/>
    <property type="project" value="InterPro"/>
</dbReference>
<dbReference type="GO" id="GO:0001092">
    <property type="term" value="F:TFIIA-class transcription factor complex binding"/>
    <property type="evidence" value="ECO:0000353"/>
    <property type="project" value="FlyBase"/>
</dbReference>
<dbReference type="GO" id="GO:0006366">
    <property type="term" value="P:transcription by RNA polymerase II"/>
    <property type="evidence" value="ECO:0000353"/>
    <property type="project" value="UniProtKB"/>
</dbReference>
<dbReference type="GO" id="GO:0006367">
    <property type="term" value="P:transcription initiation at RNA polymerase II promoter"/>
    <property type="evidence" value="ECO:0000314"/>
    <property type="project" value="FlyBase"/>
</dbReference>
<dbReference type="CDD" id="cd08045">
    <property type="entry name" value="HFD_TAF4"/>
    <property type="match status" value="1"/>
</dbReference>
<dbReference type="FunFam" id="1.20.120.1110:FF:000004">
    <property type="entry name" value="TBP-associated factor 4, isoform F"/>
    <property type="match status" value="1"/>
</dbReference>
<dbReference type="FunFam" id="1.10.20.10:FF:000015">
    <property type="entry name" value="Transcription initiation factor TFIID subunit 4B"/>
    <property type="match status" value="1"/>
</dbReference>
<dbReference type="Gene3D" id="1.10.20.10">
    <property type="entry name" value="Histone, subunit A"/>
    <property type="match status" value="1"/>
</dbReference>
<dbReference type="Gene3D" id="1.20.120.1110">
    <property type="entry name" value="TAFH/NHR1 domain"/>
    <property type="match status" value="1"/>
</dbReference>
<dbReference type="InterPro" id="IPR009072">
    <property type="entry name" value="Histone-fold"/>
</dbReference>
<dbReference type="InterPro" id="IPR045144">
    <property type="entry name" value="TAF4"/>
</dbReference>
<dbReference type="InterPro" id="IPR007900">
    <property type="entry name" value="TAF4_C"/>
</dbReference>
<dbReference type="InterPro" id="IPR037249">
    <property type="entry name" value="TAFH/NHR1_dom_sf"/>
</dbReference>
<dbReference type="InterPro" id="IPR003894">
    <property type="entry name" value="TAFH_NHR1"/>
</dbReference>
<dbReference type="PANTHER" id="PTHR15138">
    <property type="entry name" value="TRANSCRIPTION INITIATION FACTOR TFIID SUBUNIT 4"/>
    <property type="match status" value="1"/>
</dbReference>
<dbReference type="PANTHER" id="PTHR15138:SF14">
    <property type="entry name" value="TRANSCRIPTION INITIATION FACTOR TFIID SUBUNIT 4"/>
    <property type="match status" value="1"/>
</dbReference>
<dbReference type="Pfam" id="PF05236">
    <property type="entry name" value="TAF4"/>
    <property type="match status" value="1"/>
</dbReference>
<dbReference type="Pfam" id="PF07531">
    <property type="entry name" value="TAFH"/>
    <property type="match status" value="1"/>
</dbReference>
<dbReference type="SMART" id="SM00549">
    <property type="entry name" value="TAFH"/>
    <property type="match status" value="1"/>
</dbReference>
<dbReference type="SUPFAM" id="SSF47113">
    <property type="entry name" value="Histone-fold"/>
    <property type="match status" value="1"/>
</dbReference>
<dbReference type="SUPFAM" id="SSF158553">
    <property type="entry name" value="TAFH domain-like"/>
    <property type="match status" value="1"/>
</dbReference>
<dbReference type="PROSITE" id="PS51119">
    <property type="entry name" value="TAFH"/>
    <property type="match status" value="1"/>
</dbReference>
<evidence type="ECO:0000255" key="1">
    <source>
        <dbReference type="PROSITE-ProRule" id="PRU00440"/>
    </source>
</evidence>
<evidence type="ECO:0000256" key="2">
    <source>
        <dbReference type="SAM" id="MobiDB-lite"/>
    </source>
</evidence>
<evidence type="ECO:0000269" key="3">
    <source>
    </source>
</evidence>
<evidence type="ECO:0000269" key="4">
    <source>
    </source>
</evidence>
<evidence type="ECO:0000269" key="5">
    <source>
    </source>
</evidence>
<evidence type="ECO:0000269" key="6">
    <source>
    </source>
</evidence>
<evidence type="ECO:0000269" key="7">
    <source>
    </source>
</evidence>
<evidence type="ECO:0000303" key="8">
    <source>
    </source>
</evidence>
<evidence type="ECO:0000303" key="9">
    <source ref="6"/>
</evidence>
<evidence type="ECO:0000305" key="10"/>
<organism>
    <name type="scientific">Drosophila melanogaster</name>
    <name type="common">Fruit fly</name>
    <dbReference type="NCBI Taxonomy" id="7227"/>
    <lineage>
        <taxon>Eukaryota</taxon>
        <taxon>Metazoa</taxon>
        <taxon>Ecdysozoa</taxon>
        <taxon>Arthropoda</taxon>
        <taxon>Hexapoda</taxon>
        <taxon>Insecta</taxon>
        <taxon>Pterygota</taxon>
        <taxon>Neoptera</taxon>
        <taxon>Endopterygota</taxon>
        <taxon>Diptera</taxon>
        <taxon>Brachycera</taxon>
        <taxon>Muscomorpha</taxon>
        <taxon>Ephydroidea</taxon>
        <taxon>Drosophilidae</taxon>
        <taxon>Drosophila</taxon>
        <taxon>Sophophora</taxon>
    </lineage>
</organism>
<reference key="1">
    <citation type="journal article" date="1993" name="Cell">
        <title>Molecular cloning and functional analysis of Drosophila TAF110 reveal properties expected of coactivators.</title>
        <authorList>
            <person name="Hoey T."/>
            <person name="Weinzierl R.O.J."/>
            <person name="Gill G."/>
            <person name="Chen J.-L."/>
            <person name="Dynlacht B.D."/>
            <person name="Tjian R."/>
        </authorList>
    </citation>
    <scope>NUCLEOTIDE SEQUENCE [MRNA] (ISOFORM A)</scope>
    <scope>PROTEIN SEQUENCE OF 519-540; 597-616 AND 857-874</scope>
    <source>
        <tissue>Embryo</tissue>
    </source>
</reference>
<reference key="2">
    <citation type="journal article" date="1993" name="Proc. Natl. Acad. Sci. U.S.A.">
        <title>The Drosophila 110-kDa transcription factor TFIID subunit directly interacts with the N-terminal region of the 230-kDa subunit.</title>
        <authorList>
            <person name="Kokubo T."/>
            <person name="Gong D.-W."/>
            <person name="Roeder R.G."/>
            <person name="Horikoshi M."/>
            <person name="Nakatani Y."/>
        </authorList>
    </citation>
    <scope>NUCLEOTIDE SEQUENCE [MRNA] (ISOFORM A)</scope>
    <scope>PROTEIN SEQUENCE OF 398-406; 520-540 AND 860-877</scope>
    <scope>INTERACTION WITH TAF1</scope>
    <source>
        <tissue>Embryo</tissue>
    </source>
</reference>
<reference key="3">
    <citation type="journal article" date="2000" name="Science">
        <title>The genome sequence of Drosophila melanogaster.</title>
        <authorList>
            <person name="Adams M.D."/>
            <person name="Celniker S.E."/>
            <person name="Holt R.A."/>
            <person name="Evans C.A."/>
            <person name="Gocayne J.D."/>
            <person name="Amanatides P.G."/>
            <person name="Scherer S.E."/>
            <person name="Li P.W."/>
            <person name="Hoskins R.A."/>
            <person name="Galle R.F."/>
            <person name="George R.A."/>
            <person name="Lewis S.E."/>
            <person name="Richards S."/>
            <person name="Ashburner M."/>
            <person name="Henderson S.N."/>
            <person name="Sutton G.G."/>
            <person name="Wortman J.R."/>
            <person name="Yandell M.D."/>
            <person name="Zhang Q."/>
            <person name="Chen L.X."/>
            <person name="Brandon R.C."/>
            <person name="Rogers Y.-H.C."/>
            <person name="Blazej R.G."/>
            <person name="Champe M."/>
            <person name="Pfeiffer B.D."/>
            <person name="Wan K.H."/>
            <person name="Doyle C."/>
            <person name="Baxter E.G."/>
            <person name="Helt G."/>
            <person name="Nelson C.R."/>
            <person name="Miklos G.L.G."/>
            <person name="Abril J.F."/>
            <person name="Agbayani A."/>
            <person name="An H.-J."/>
            <person name="Andrews-Pfannkoch C."/>
            <person name="Baldwin D."/>
            <person name="Ballew R.M."/>
            <person name="Basu A."/>
            <person name="Baxendale J."/>
            <person name="Bayraktaroglu L."/>
            <person name="Beasley E.M."/>
            <person name="Beeson K.Y."/>
            <person name="Benos P.V."/>
            <person name="Berman B.P."/>
            <person name="Bhandari D."/>
            <person name="Bolshakov S."/>
            <person name="Borkova D."/>
            <person name="Botchan M.R."/>
            <person name="Bouck J."/>
            <person name="Brokstein P."/>
            <person name="Brottier P."/>
            <person name="Burtis K.C."/>
            <person name="Busam D.A."/>
            <person name="Butler H."/>
            <person name="Cadieu E."/>
            <person name="Center A."/>
            <person name="Chandra I."/>
            <person name="Cherry J.M."/>
            <person name="Cawley S."/>
            <person name="Dahlke C."/>
            <person name="Davenport L.B."/>
            <person name="Davies P."/>
            <person name="de Pablos B."/>
            <person name="Delcher A."/>
            <person name="Deng Z."/>
            <person name="Mays A.D."/>
            <person name="Dew I."/>
            <person name="Dietz S.M."/>
            <person name="Dodson K."/>
            <person name="Doup L.E."/>
            <person name="Downes M."/>
            <person name="Dugan-Rocha S."/>
            <person name="Dunkov B.C."/>
            <person name="Dunn P."/>
            <person name="Durbin K.J."/>
            <person name="Evangelista C.C."/>
            <person name="Ferraz C."/>
            <person name="Ferriera S."/>
            <person name="Fleischmann W."/>
            <person name="Fosler C."/>
            <person name="Gabrielian A.E."/>
            <person name="Garg N.S."/>
            <person name="Gelbart W.M."/>
            <person name="Glasser K."/>
            <person name="Glodek A."/>
            <person name="Gong F."/>
            <person name="Gorrell J.H."/>
            <person name="Gu Z."/>
            <person name="Guan P."/>
            <person name="Harris M."/>
            <person name="Harris N.L."/>
            <person name="Harvey D.A."/>
            <person name="Heiman T.J."/>
            <person name="Hernandez J.R."/>
            <person name="Houck J."/>
            <person name="Hostin D."/>
            <person name="Houston K.A."/>
            <person name="Howland T.J."/>
            <person name="Wei M.-H."/>
            <person name="Ibegwam C."/>
            <person name="Jalali M."/>
            <person name="Kalush F."/>
            <person name="Karpen G.H."/>
            <person name="Ke Z."/>
            <person name="Kennison J.A."/>
            <person name="Ketchum K.A."/>
            <person name="Kimmel B.E."/>
            <person name="Kodira C.D."/>
            <person name="Kraft C.L."/>
            <person name="Kravitz S."/>
            <person name="Kulp D."/>
            <person name="Lai Z."/>
            <person name="Lasko P."/>
            <person name="Lei Y."/>
            <person name="Levitsky A.A."/>
            <person name="Li J.H."/>
            <person name="Li Z."/>
            <person name="Liang Y."/>
            <person name="Lin X."/>
            <person name="Liu X."/>
            <person name="Mattei B."/>
            <person name="McIntosh T.C."/>
            <person name="McLeod M.P."/>
            <person name="McPherson D."/>
            <person name="Merkulov G."/>
            <person name="Milshina N.V."/>
            <person name="Mobarry C."/>
            <person name="Morris J."/>
            <person name="Moshrefi A."/>
            <person name="Mount S.M."/>
            <person name="Moy M."/>
            <person name="Murphy B."/>
            <person name="Murphy L."/>
            <person name="Muzny D.M."/>
            <person name="Nelson D.L."/>
            <person name="Nelson D.R."/>
            <person name="Nelson K.A."/>
            <person name="Nixon K."/>
            <person name="Nusskern D.R."/>
            <person name="Pacleb J.M."/>
            <person name="Palazzolo M."/>
            <person name="Pittman G.S."/>
            <person name="Pan S."/>
            <person name="Pollard J."/>
            <person name="Puri V."/>
            <person name="Reese M.G."/>
            <person name="Reinert K."/>
            <person name="Remington K."/>
            <person name="Saunders R.D.C."/>
            <person name="Scheeler F."/>
            <person name="Shen H."/>
            <person name="Shue B.C."/>
            <person name="Siden-Kiamos I."/>
            <person name="Simpson M."/>
            <person name="Skupski M.P."/>
            <person name="Smith T.J."/>
            <person name="Spier E."/>
            <person name="Spradling A.C."/>
            <person name="Stapleton M."/>
            <person name="Strong R."/>
            <person name="Sun E."/>
            <person name="Svirskas R."/>
            <person name="Tector C."/>
            <person name="Turner R."/>
            <person name="Venter E."/>
            <person name="Wang A.H."/>
            <person name="Wang X."/>
            <person name="Wang Z.-Y."/>
            <person name="Wassarman D.A."/>
            <person name="Weinstock G.M."/>
            <person name="Weissenbach J."/>
            <person name="Williams S.M."/>
            <person name="Woodage T."/>
            <person name="Worley K.C."/>
            <person name="Wu D."/>
            <person name="Yang S."/>
            <person name="Yao Q.A."/>
            <person name="Ye J."/>
            <person name="Yeh R.-F."/>
            <person name="Zaveri J.S."/>
            <person name="Zhan M."/>
            <person name="Zhang G."/>
            <person name="Zhao Q."/>
            <person name="Zheng L."/>
            <person name="Zheng X.H."/>
            <person name="Zhong F.N."/>
            <person name="Zhong W."/>
            <person name="Zhou X."/>
            <person name="Zhu S.C."/>
            <person name="Zhu X."/>
            <person name="Smith H.O."/>
            <person name="Gibbs R.A."/>
            <person name="Myers E.W."/>
            <person name="Rubin G.M."/>
            <person name="Venter J.C."/>
        </authorList>
    </citation>
    <scope>NUCLEOTIDE SEQUENCE [LARGE SCALE GENOMIC DNA]</scope>
    <source>
        <strain>Berkeley</strain>
    </source>
</reference>
<reference key="4">
    <citation type="journal article" date="2002" name="Genome Biol.">
        <title>Annotation of the Drosophila melanogaster euchromatic genome: a systematic review.</title>
        <authorList>
            <person name="Misra S."/>
            <person name="Crosby M.A."/>
            <person name="Mungall C.J."/>
            <person name="Matthews B.B."/>
            <person name="Campbell K.S."/>
            <person name="Hradecky P."/>
            <person name="Huang Y."/>
            <person name="Kaminker J.S."/>
            <person name="Millburn G.H."/>
            <person name="Prochnik S.E."/>
            <person name="Smith C.D."/>
            <person name="Tupy J.L."/>
            <person name="Whitfield E.J."/>
            <person name="Bayraktaroglu L."/>
            <person name="Berman B.P."/>
            <person name="Bettencourt B.R."/>
            <person name="Celniker S.E."/>
            <person name="de Grey A.D.N.J."/>
            <person name="Drysdale R.A."/>
            <person name="Harris N.L."/>
            <person name="Richter J."/>
            <person name="Russo S."/>
            <person name="Schroeder A.J."/>
            <person name="Shu S.Q."/>
            <person name="Stapleton M."/>
            <person name="Yamada C."/>
            <person name="Ashburner M."/>
            <person name="Gelbart W.M."/>
            <person name="Rubin G.M."/>
            <person name="Lewis S.E."/>
        </authorList>
    </citation>
    <scope>GENOME REANNOTATION</scope>
    <scope>ALTERNATIVE SPLICING</scope>
    <source>
        <strain>Berkeley</strain>
    </source>
</reference>
<reference key="5">
    <citation type="journal article" date="2002" name="Genome Biol.">
        <title>A Drosophila full-length cDNA resource.</title>
        <authorList>
            <person name="Stapleton M."/>
            <person name="Carlson J.W."/>
            <person name="Brokstein P."/>
            <person name="Yu C."/>
            <person name="Champe M."/>
            <person name="George R.A."/>
            <person name="Guarin H."/>
            <person name="Kronmiller B."/>
            <person name="Pacleb J.M."/>
            <person name="Park S."/>
            <person name="Wan K.H."/>
            <person name="Rubin G.M."/>
            <person name="Celniker S.E."/>
        </authorList>
    </citation>
    <scope>NUCLEOTIDE SEQUENCE [LARGE SCALE MRNA] (ISOFORM C)</scope>
    <source>
        <strain>Berkeley</strain>
        <tissue>Embryo</tissue>
    </source>
</reference>
<reference key="6">
    <citation type="submission" date="2006-04" db="EMBL/GenBank/DDBJ databases">
        <authorList>
            <person name="Stapleton M."/>
            <person name="Carlson J.W."/>
            <person name="Chavez C."/>
            <person name="Frise E."/>
            <person name="George R.A."/>
            <person name="Pacleb J.M."/>
            <person name="Park S."/>
            <person name="Wan K.H."/>
            <person name="Yu C."/>
            <person name="Celniker S.E."/>
        </authorList>
    </citation>
    <scope>NUCLEOTIDE SEQUENCE [LARGE SCALE MRNA] (ISOFORM C)</scope>
    <source>
        <strain>Berkeley</strain>
    </source>
</reference>
<reference key="7">
    <citation type="journal article" date="1993" name="Genes Dev.">
        <title>Drosophila TFIIA-L is processed into two subunits that are associated with the TBP/TAF complex.</title>
        <authorList>
            <person name="Yokomori K."/>
            <person name="Admon A."/>
            <person name="Goodrich J.A."/>
            <person name="Chen J.-L."/>
            <person name="Tjian R."/>
        </authorList>
    </citation>
    <scope>FUNCTION</scope>
    <scope>INTERACTION WITH TFIIA-L</scope>
    <source>
        <tissue>Embryo</tissue>
    </source>
</reference>
<reference key="8">
    <citation type="journal article" date="1993" name="Genes Dev.">
        <title>Molecular cloning and characterization of dTAFII30 alpha and dTAFII30 beta: two small subunits of Drosophila TFIID.</title>
        <authorList>
            <person name="Yokomori K."/>
            <person name="Chen J.L."/>
            <person name="Admon A."/>
            <person name="Zhou S."/>
            <person name="Tjian R."/>
        </authorList>
    </citation>
    <scope>INTERACTION WITH TAF11 AND TAF12</scope>
</reference>
<reference key="9">
    <citation type="journal article" date="1993" name="Mol. Cell. Biol.">
        <title>Molecular cloning, expression, and characterization of the Drosophila 85-kilodalton TFIID subunit.</title>
        <authorList>
            <person name="Kokubo T."/>
            <person name="Gong D.-W."/>
            <person name="Yamashita S."/>
            <person name="Takada R."/>
            <person name="Roeder R.G."/>
            <person name="Horikoshi M."/>
            <person name="Nakatani Y."/>
        </authorList>
    </citation>
    <scope>INTERACTION WITH TAF5</scope>
    <source>
        <tissue>Embryo</tissue>
    </source>
</reference>
<reference key="10">
    <citation type="journal article" date="1993" name="Nature">
        <title>Largest subunit of Drosophila transcription factor IID directs assembly of a complex containing TBP and a coactivator.</title>
        <authorList>
            <person name="Weinzierl R.O."/>
            <person name="Dynlacht B.D."/>
            <person name="Tjian R."/>
        </authorList>
    </citation>
    <scope>INTERACTION WITH TAF1</scope>
</reference>
<accession>P47825</accession>
<accession>P49845</accession>
<accession>Q0E8E3</accession>
<accession>Q1LZ31</accession>
<accession>Q8T9E0</accession>
<accession>Q9VUY7</accession>
<keyword id="KW-0025">Alternative splicing</keyword>
<keyword id="KW-0903">Direct protein sequencing</keyword>
<keyword id="KW-0539">Nucleus</keyword>
<keyword id="KW-1185">Reference proteome</keyword>
<keyword id="KW-0804">Transcription</keyword>
<keyword id="KW-0805">Transcription regulation</keyword>
<gene>
    <name type="primary">Taf4</name>
    <name type="synonym">TAF110</name>
    <name type="ORF">CG5444</name>
</gene>
<protein>
    <recommendedName>
        <fullName>Transcription initiation factor TFIID subunit 4</fullName>
    </recommendedName>
    <alternativeName>
        <fullName>110 kDa TBP-associated factor</fullName>
    </alternativeName>
    <alternativeName>
        <fullName>Transcription initiation factor TFIID 110 kDa subunit</fullName>
        <shortName>TAFII-110</shortName>
        <shortName>p110</shortName>
    </alternativeName>
</protein>
<name>TAF4_DROME</name>
<sequence>MNTSQTAAGNRITFTSQPLPNGTISIAGNPGAVISTAQLPNTTTIKTIQAGIGGQHQGLQQVHHVQQQQQSQQQQQQQQQTQSAGQPLLNSMLPAGVVVGMRQQAPSQQQQKNVPTNPLSRVVINSHMAGVRPQSPSITLSTLNTGQTPALLVKTDNGFQLLRVGTTTGPPTVTQTITNTSNNSNTTSTTNHPTTTQIRLQTVPAAASMTNTTATSNIIVNSVASSGYANSSQPPHLTQLNAQAPQLPQITQIQTIPAQQSQQQQVNNVSSAGGTATAVSSTTAATTTQQGNTKEKCRKFLANLIELSTREPKPVEKNVRTLIQELVNANVEPEEFCDRLERLLNASPQPCLIGFLKKSLPLLRQALYTKELVIEGIKPPPQHVLGLAGLSQQLPKIQAQIRPIGPSQTTTIGQTQVRMITPNALGTPRPTIGHTTISKQPPNIRLPTAPRLVNTGGIRTQIPSLQVPGQANIVQIRGPQHAQLQRTGSVQIRATTRPPNSVPTANKLTAVKVGQTQIKAITPSLHPPSLAAISGGPPPTPTLSVLSTLNSASTTTLPIPSLPTVHLPPEALRAREQMQNSLNHNSNHFDAKLVEIKAPSLHPPHMERINASLTPIGAKTMARPPPAINKAIGKKKRDAMEMDAKLNTSSGGAASAANSFFQQSSMSSMYGDDDINDVAAMGGVNLAEESQRILGCTENIGTQIRSCKDEVFLNLPSLQARIRAITSEAGLDEPSQDVAVLISHACQERLKNIVEKLAVIAEHRIDVIKLDPRYEPAKDVRGQIKFLEELDKAEQKRHEELEREMLLRAAKSRSRVEDPEQAKMKARAKEMQRAEMEELRQRDANLTALQAIGPRKKLKLDGETVSSGAGSSGGGVLSSSGSAPTTLRPRIKRVNLRDMLFYMEQEREFCRSSMLFKTYLK</sequence>
<comment type="function">
    <text evidence="3">TFIID is a multimeric protein complex that plays a central role in mediating promoter responses to various activators and repressors. May function as a coactivator by serving as a site of protein-protein contact between activators like Sp1 (or btd) and TFIID complex.</text>
</comment>
<comment type="subunit">
    <text evidence="3 4 5 6 7">Belongs to the TFIID complex which is composed of TATA binding protein (Tbp) and a number of TBP-associated factors (TAFs). Interacts with TFIIA-L when in complex with Tbp. Interacts with Taf1, Taf5, Taf11 and Taf12.</text>
</comment>
<comment type="interaction">
    <interactant intactId="EBI-277958">
        <id>P47825</id>
    </interactant>
    <interactant intactId="EBI-152653">
        <id>Q9V9W8</id>
        <label>pygo</label>
    </interactant>
    <organismsDiffer>false</organismsDiffer>
    <experiments>2</experiments>
</comment>
<comment type="interaction">
    <interactant intactId="EBI-277958">
        <id>P47825</id>
    </interactant>
    <interactant intactId="EBI-499582">
        <id>P51123</id>
        <label>Taf1</label>
    </interactant>
    <organismsDiffer>false</organismsDiffer>
    <experiments>7</experiments>
</comment>
<comment type="interaction">
    <interactant intactId="EBI-277958">
        <id>P47825</id>
    </interactant>
    <interactant intactId="EBI-2603114">
        <id>P03255</id>
    </interactant>
    <organismsDiffer>true</organismsDiffer>
    <experiments>3</experiments>
</comment>
<comment type="subcellular location">
    <subcellularLocation>
        <location>Nucleus</location>
    </subcellularLocation>
</comment>
<comment type="alternative products">
    <event type="alternative splicing"/>
    <isoform>
        <id>P47825-1</id>
        <name>A</name>
        <name>B</name>
        <sequence type="displayed"/>
    </isoform>
    <isoform>
        <id>P47825-2</id>
        <name>C</name>
        <name>D</name>
        <sequence type="described" ref="VSP_004441"/>
    </isoform>
</comment>
<comment type="similarity">
    <text evidence="10">Belongs to the TAF4 family.</text>
</comment>
<proteinExistence type="evidence at protein level"/>